<protein>
    <recommendedName>
        <fullName evidence="1">Bifunctional protein HldE</fullName>
    </recommendedName>
    <domain>
        <recommendedName>
            <fullName evidence="1">D-beta-D-heptose 7-phosphate kinase</fullName>
            <ecNumber evidence="1">2.7.1.167</ecNumber>
        </recommendedName>
        <alternativeName>
            <fullName evidence="1">D-beta-D-heptose 7-phosphotransferase</fullName>
        </alternativeName>
        <alternativeName>
            <fullName evidence="1">D-glycero-beta-D-manno-heptose-7-phosphate kinase</fullName>
        </alternativeName>
    </domain>
    <domain>
        <recommendedName>
            <fullName evidence="1">D-beta-D-heptose 1-phosphate adenylyltransferase</fullName>
            <ecNumber evidence="1">2.7.7.70</ecNumber>
        </recommendedName>
        <alternativeName>
            <fullName evidence="1">D-glycero-beta-D-manno-heptose 1-phosphate adenylyltransferase</fullName>
        </alternativeName>
    </domain>
</protein>
<accession>B5EEZ1</accession>
<keyword id="KW-0067">ATP-binding</keyword>
<keyword id="KW-0119">Carbohydrate metabolism</keyword>
<keyword id="KW-0418">Kinase</keyword>
<keyword id="KW-0511">Multifunctional enzyme</keyword>
<keyword id="KW-0547">Nucleotide-binding</keyword>
<keyword id="KW-0548">Nucleotidyltransferase</keyword>
<keyword id="KW-1185">Reference proteome</keyword>
<keyword id="KW-0808">Transferase</keyword>
<dbReference type="EC" id="2.7.1.167" evidence="1"/>
<dbReference type="EC" id="2.7.7.70" evidence="1"/>
<dbReference type="EMBL" id="CP001124">
    <property type="protein sequence ID" value="ACH37887.1"/>
    <property type="molecule type" value="Genomic_DNA"/>
</dbReference>
<dbReference type="RefSeq" id="WP_012529298.1">
    <property type="nucleotide sequence ID" value="NC_011146.1"/>
</dbReference>
<dbReference type="SMR" id="B5EEZ1"/>
<dbReference type="STRING" id="404380.Gbem_0864"/>
<dbReference type="KEGG" id="gbm:Gbem_0864"/>
<dbReference type="eggNOG" id="COG0615">
    <property type="taxonomic scope" value="Bacteria"/>
</dbReference>
<dbReference type="eggNOG" id="COG2870">
    <property type="taxonomic scope" value="Bacteria"/>
</dbReference>
<dbReference type="HOGENOM" id="CLU_021150_2_1_7"/>
<dbReference type="OrthoDB" id="9802794at2"/>
<dbReference type="UniPathway" id="UPA00356">
    <property type="reaction ID" value="UER00437"/>
</dbReference>
<dbReference type="UniPathway" id="UPA00356">
    <property type="reaction ID" value="UER00439"/>
</dbReference>
<dbReference type="Proteomes" id="UP000008825">
    <property type="component" value="Chromosome"/>
</dbReference>
<dbReference type="GO" id="GO:0005829">
    <property type="term" value="C:cytosol"/>
    <property type="evidence" value="ECO:0007669"/>
    <property type="project" value="TreeGrafter"/>
</dbReference>
<dbReference type="GO" id="GO:0005524">
    <property type="term" value="F:ATP binding"/>
    <property type="evidence" value="ECO:0007669"/>
    <property type="project" value="UniProtKB-UniRule"/>
</dbReference>
<dbReference type="GO" id="GO:0033785">
    <property type="term" value="F:heptose 7-phosphate kinase activity"/>
    <property type="evidence" value="ECO:0007669"/>
    <property type="project" value="UniProtKB-UniRule"/>
</dbReference>
<dbReference type="GO" id="GO:0033786">
    <property type="term" value="F:heptose-1-phosphate adenylyltransferase activity"/>
    <property type="evidence" value="ECO:0007669"/>
    <property type="project" value="UniProtKB-UniRule"/>
</dbReference>
<dbReference type="GO" id="GO:0016773">
    <property type="term" value="F:phosphotransferase activity, alcohol group as acceptor"/>
    <property type="evidence" value="ECO:0007669"/>
    <property type="project" value="InterPro"/>
</dbReference>
<dbReference type="GO" id="GO:0097171">
    <property type="term" value="P:ADP-L-glycero-beta-D-manno-heptose biosynthetic process"/>
    <property type="evidence" value="ECO:0007669"/>
    <property type="project" value="UniProtKB-UniPathway"/>
</dbReference>
<dbReference type="CDD" id="cd01172">
    <property type="entry name" value="RfaE_like"/>
    <property type="match status" value="1"/>
</dbReference>
<dbReference type="FunFam" id="3.40.1190.20:FF:000002">
    <property type="entry name" value="Bifunctional protein HldE"/>
    <property type="match status" value="1"/>
</dbReference>
<dbReference type="Gene3D" id="3.40.1190.20">
    <property type="match status" value="1"/>
</dbReference>
<dbReference type="Gene3D" id="3.40.50.620">
    <property type="entry name" value="HUPs"/>
    <property type="match status" value="1"/>
</dbReference>
<dbReference type="HAMAP" id="MF_01603">
    <property type="entry name" value="HldE"/>
    <property type="match status" value="1"/>
</dbReference>
<dbReference type="InterPro" id="IPR023030">
    <property type="entry name" value="Bifunc_HldE"/>
</dbReference>
<dbReference type="InterPro" id="IPR004821">
    <property type="entry name" value="Cyt_trans-like"/>
</dbReference>
<dbReference type="InterPro" id="IPR011611">
    <property type="entry name" value="PfkB_dom"/>
</dbReference>
<dbReference type="InterPro" id="IPR011913">
    <property type="entry name" value="RfaE_dom_I"/>
</dbReference>
<dbReference type="InterPro" id="IPR011914">
    <property type="entry name" value="RfaE_dom_II"/>
</dbReference>
<dbReference type="InterPro" id="IPR029056">
    <property type="entry name" value="Ribokinase-like"/>
</dbReference>
<dbReference type="InterPro" id="IPR014729">
    <property type="entry name" value="Rossmann-like_a/b/a_fold"/>
</dbReference>
<dbReference type="NCBIfam" id="TIGR00125">
    <property type="entry name" value="cyt_tran_rel"/>
    <property type="match status" value="1"/>
</dbReference>
<dbReference type="NCBIfam" id="NF008454">
    <property type="entry name" value="PRK11316.1"/>
    <property type="match status" value="1"/>
</dbReference>
<dbReference type="NCBIfam" id="TIGR02198">
    <property type="entry name" value="rfaE_dom_I"/>
    <property type="match status" value="1"/>
</dbReference>
<dbReference type="NCBIfam" id="TIGR02199">
    <property type="entry name" value="rfaE_dom_II"/>
    <property type="match status" value="1"/>
</dbReference>
<dbReference type="PANTHER" id="PTHR46969">
    <property type="entry name" value="BIFUNCTIONAL PROTEIN HLDE"/>
    <property type="match status" value="1"/>
</dbReference>
<dbReference type="PANTHER" id="PTHR46969:SF1">
    <property type="entry name" value="BIFUNCTIONAL PROTEIN HLDE"/>
    <property type="match status" value="1"/>
</dbReference>
<dbReference type="Pfam" id="PF01467">
    <property type="entry name" value="CTP_transf_like"/>
    <property type="match status" value="1"/>
</dbReference>
<dbReference type="Pfam" id="PF00294">
    <property type="entry name" value="PfkB"/>
    <property type="match status" value="1"/>
</dbReference>
<dbReference type="SUPFAM" id="SSF52374">
    <property type="entry name" value="Nucleotidylyl transferase"/>
    <property type="match status" value="1"/>
</dbReference>
<dbReference type="SUPFAM" id="SSF53613">
    <property type="entry name" value="Ribokinase-like"/>
    <property type="match status" value="1"/>
</dbReference>
<gene>
    <name evidence="1" type="primary">hldE</name>
    <name type="ordered locus">Gbem_0864</name>
</gene>
<comment type="function">
    <text evidence="1">Catalyzes the phosphorylation of D-glycero-D-manno-heptose 7-phosphate at the C-1 position to selectively form D-glycero-beta-D-manno-heptose-1,7-bisphosphate.</text>
</comment>
<comment type="function">
    <text evidence="1">Catalyzes the ADP transfer from ATP to D-glycero-beta-D-manno-heptose 1-phosphate, yielding ADP-D-glycero-beta-D-manno-heptose.</text>
</comment>
<comment type="catalytic activity">
    <reaction evidence="1">
        <text>D-glycero-beta-D-manno-heptose 7-phosphate + ATP = D-glycero-beta-D-manno-heptose 1,7-bisphosphate + ADP + H(+)</text>
        <dbReference type="Rhea" id="RHEA:27473"/>
        <dbReference type="ChEBI" id="CHEBI:15378"/>
        <dbReference type="ChEBI" id="CHEBI:30616"/>
        <dbReference type="ChEBI" id="CHEBI:60204"/>
        <dbReference type="ChEBI" id="CHEBI:60208"/>
        <dbReference type="ChEBI" id="CHEBI:456216"/>
        <dbReference type="EC" id="2.7.1.167"/>
    </reaction>
</comment>
<comment type="catalytic activity">
    <reaction evidence="1">
        <text>D-glycero-beta-D-manno-heptose 1-phosphate + ATP + H(+) = ADP-D-glycero-beta-D-manno-heptose + diphosphate</text>
        <dbReference type="Rhea" id="RHEA:27465"/>
        <dbReference type="ChEBI" id="CHEBI:15378"/>
        <dbReference type="ChEBI" id="CHEBI:30616"/>
        <dbReference type="ChEBI" id="CHEBI:33019"/>
        <dbReference type="ChEBI" id="CHEBI:59967"/>
        <dbReference type="ChEBI" id="CHEBI:61593"/>
        <dbReference type="EC" id="2.7.7.70"/>
    </reaction>
</comment>
<comment type="pathway">
    <text evidence="1">Nucleotide-sugar biosynthesis; ADP-L-glycero-beta-D-manno-heptose biosynthesis; ADP-L-glycero-beta-D-manno-heptose from D-glycero-beta-D-manno-heptose 7-phosphate: step 1/4.</text>
</comment>
<comment type="pathway">
    <text evidence="1">Nucleotide-sugar biosynthesis; ADP-L-glycero-beta-D-manno-heptose biosynthesis; ADP-L-glycero-beta-D-manno-heptose from D-glycero-beta-D-manno-heptose 7-phosphate: step 3/4.</text>
</comment>
<comment type="subunit">
    <text evidence="1">Homodimer.</text>
</comment>
<comment type="similarity">
    <text evidence="1">In the N-terminal section; belongs to the carbohydrate kinase PfkB family.</text>
</comment>
<comment type="similarity">
    <text evidence="1">In the C-terminal section; belongs to the cytidylyltransferase family.</text>
</comment>
<proteinExistence type="inferred from homology"/>
<feature type="chain" id="PRO_1000148125" description="Bifunctional protein HldE">
    <location>
        <begin position="1"/>
        <end position="487"/>
    </location>
</feature>
<feature type="region of interest" description="Ribokinase">
    <location>
        <begin position="1"/>
        <end position="326"/>
    </location>
</feature>
<feature type="region of interest" description="Cytidylyltransferase">
    <location>
        <begin position="356"/>
        <end position="487"/>
    </location>
</feature>
<feature type="active site" evidence="1">
    <location>
        <position position="275"/>
    </location>
</feature>
<feature type="binding site" evidence="1">
    <location>
        <begin position="205"/>
        <end position="208"/>
    </location>
    <ligand>
        <name>ATP</name>
        <dbReference type="ChEBI" id="CHEBI:30616"/>
    </ligand>
</feature>
<sequence>MERREVESFFERATSIRALVVGDLMLDEYLWGRAERISPEAPVQVVEVAREDLRLGGAGNVVNNLAALGCQVSVCSVIGSDENGALLRRALEEKGAGLEGLFEEGERRTSKKTRVLAANQQIVRIDRETKSSIAAASEQGIIDYLAARSGDFDVIVVSDYLKGVLTPAVLSAVCRSGRELGIPVVVDPKGNDYGKYRGATILTPNRKEAEIASGVAITDQESLQCAASGLLSCLELDALLITRSEAGMSLFPAAGGAVHIPTVAREVFDVTGAGDTVISVLSLGLACGLTMADAAWIANVAAGIAVGKLGTSTVAPQEIVAEVGHGAKDSDSKIKNLDVLAHAIAREHSRGKKVVFTNGCFDLLHVGHVKYLQKARGLGDILVVGLNTDASVRRLKGEKRPLIEETERAHILAALDCIDYVVLFDEDTPLKVIETLGPDILVKGGDYSIEGVVGREVVEARGGRVELIQFVDGRSTSRIIEKILSSY</sequence>
<name>HLDE_CITBB</name>
<organism>
    <name type="scientific">Citrifermentans bemidjiense (strain ATCC BAA-1014 / DSM 16622 / JCM 12645 / Bem)</name>
    <name type="common">Geobacter bemidjiensis</name>
    <dbReference type="NCBI Taxonomy" id="404380"/>
    <lineage>
        <taxon>Bacteria</taxon>
        <taxon>Pseudomonadati</taxon>
        <taxon>Thermodesulfobacteriota</taxon>
        <taxon>Desulfuromonadia</taxon>
        <taxon>Geobacterales</taxon>
        <taxon>Geobacteraceae</taxon>
        <taxon>Citrifermentans</taxon>
    </lineage>
</organism>
<reference key="1">
    <citation type="submission" date="2008-07" db="EMBL/GenBank/DDBJ databases">
        <title>Complete sequence of Geobacter bemidjiensis BEM.</title>
        <authorList>
            <consortium name="US DOE Joint Genome Institute"/>
            <person name="Lucas S."/>
            <person name="Copeland A."/>
            <person name="Lapidus A."/>
            <person name="Glavina del Rio T."/>
            <person name="Dalin E."/>
            <person name="Tice H."/>
            <person name="Bruce D."/>
            <person name="Goodwin L."/>
            <person name="Pitluck S."/>
            <person name="Kiss H."/>
            <person name="Brettin T."/>
            <person name="Detter J.C."/>
            <person name="Han C."/>
            <person name="Kuske C.R."/>
            <person name="Schmutz J."/>
            <person name="Larimer F."/>
            <person name="Land M."/>
            <person name="Hauser L."/>
            <person name="Kyrpides N."/>
            <person name="Lykidis A."/>
            <person name="Lovley D."/>
            <person name="Richardson P."/>
        </authorList>
    </citation>
    <scope>NUCLEOTIDE SEQUENCE [LARGE SCALE GENOMIC DNA]</scope>
    <source>
        <strain>ATCC BAA-1014 / DSM 16622 / JCM 12645 / Bem</strain>
    </source>
</reference>
<evidence type="ECO:0000255" key="1">
    <source>
        <dbReference type="HAMAP-Rule" id="MF_01603"/>
    </source>
</evidence>